<protein>
    <recommendedName>
        <fullName evidence="1">Ribosome maturation factor RimM</fullName>
    </recommendedName>
</protein>
<evidence type="ECO:0000255" key="1">
    <source>
        <dbReference type="HAMAP-Rule" id="MF_00014"/>
    </source>
</evidence>
<evidence type="ECO:0000305" key="2"/>
<accession>B2SJV2</accession>
<sequence length="170" mass="19149">MKQTERRILLGRVVGAFGVKGELKLESWTEPRSAIFRYQPWIVRAPSGQESVINGVRGRDQGKNLIAVFPGVADRDTVEAMHGTEIYVARSALPPPKPDEYYWVDLEELQVETVEGVKLGTVSHLFSTGSNDVVVVRGDRERMIPFVFPDFVKSVDFEANLIVVDWDPDF</sequence>
<reference key="1">
    <citation type="journal article" date="2008" name="BMC Genomics">
        <title>Genome sequence and rapid evolution of the rice pathogen Xanthomonas oryzae pv. oryzae PXO99A.</title>
        <authorList>
            <person name="Salzberg S.L."/>
            <person name="Sommer D.D."/>
            <person name="Schatz M.C."/>
            <person name="Phillippy A.M."/>
            <person name="Rabinowicz P.D."/>
            <person name="Tsuge S."/>
            <person name="Furutani A."/>
            <person name="Ochiai H."/>
            <person name="Delcher A.L."/>
            <person name="Kelley D."/>
            <person name="Madupu R."/>
            <person name="Puiu D."/>
            <person name="Radune D."/>
            <person name="Shumway M."/>
            <person name="Trapnell C."/>
            <person name="Aparna G."/>
            <person name="Jha G."/>
            <person name="Pandey A."/>
            <person name="Patil P.B."/>
            <person name="Ishihara H."/>
            <person name="Meyer D.F."/>
            <person name="Szurek B."/>
            <person name="Verdier V."/>
            <person name="Koebnik R."/>
            <person name="Dow J.M."/>
            <person name="Ryan R.P."/>
            <person name="Hirata H."/>
            <person name="Tsuyumu S."/>
            <person name="Won Lee S."/>
            <person name="Seo Y.-S."/>
            <person name="Sriariyanum M."/>
            <person name="Ronald P.C."/>
            <person name="Sonti R.V."/>
            <person name="Van Sluys M.-A."/>
            <person name="Leach J.E."/>
            <person name="White F.F."/>
            <person name="Bogdanove A.J."/>
        </authorList>
    </citation>
    <scope>NUCLEOTIDE SEQUENCE [LARGE SCALE GENOMIC DNA]</scope>
    <source>
        <strain>PXO99A</strain>
    </source>
</reference>
<feature type="chain" id="PRO_0000351806" description="Ribosome maturation factor RimM">
    <location>
        <begin position="1"/>
        <end position="170"/>
    </location>
</feature>
<feature type="domain" description="PRC barrel" evidence="1">
    <location>
        <begin position="98"/>
        <end position="170"/>
    </location>
</feature>
<organism>
    <name type="scientific">Xanthomonas oryzae pv. oryzae (strain PXO99A)</name>
    <dbReference type="NCBI Taxonomy" id="360094"/>
    <lineage>
        <taxon>Bacteria</taxon>
        <taxon>Pseudomonadati</taxon>
        <taxon>Pseudomonadota</taxon>
        <taxon>Gammaproteobacteria</taxon>
        <taxon>Lysobacterales</taxon>
        <taxon>Lysobacteraceae</taxon>
        <taxon>Xanthomonas</taxon>
    </lineage>
</organism>
<comment type="function">
    <text evidence="1">An accessory protein needed during the final step in the assembly of 30S ribosomal subunit, possibly for assembly of the head region. Essential for efficient processing of 16S rRNA. May be needed both before and after RbfA during the maturation of 16S rRNA. It has affinity for free ribosomal 30S subunits but not for 70S ribosomes.</text>
</comment>
<comment type="subunit">
    <text evidence="1">Binds ribosomal protein uS19.</text>
</comment>
<comment type="subcellular location">
    <subcellularLocation>
        <location evidence="1">Cytoplasm</location>
    </subcellularLocation>
</comment>
<comment type="domain">
    <text evidence="1">The PRC barrel domain binds ribosomal protein uS19.</text>
</comment>
<comment type="similarity">
    <text evidence="1">Belongs to the RimM family.</text>
</comment>
<comment type="sequence caution" evidence="2">
    <conflict type="erroneous initiation">
        <sequence resource="EMBL-CDS" id="ACD60469"/>
    </conflict>
</comment>
<gene>
    <name evidence="1" type="primary">rimM</name>
    <name type="ordered locus">PXO_02148</name>
</gene>
<proteinExistence type="inferred from homology"/>
<dbReference type="EMBL" id="CP000967">
    <property type="protein sequence ID" value="ACD60469.1"/>
    <property type="status" value="ALT_INIT"/>
    <property type="molecule type" value="Genomic_DNA"/>
</dbReference>
<dbReference type="RefSeq" id="WP_011407909.1">
    <property type="nucleotide sequence ID" value="NC_010717.2"/>
</dbReference>
<dbReference type="SMR" id="B2SJV2"/>
<dbReference type="KEGG" id="xop:PXO_02148"/>
<dbReference type="eggNOG" id="COG0806">
    <property type="taxonomic scope" value="Bacteria"/>
</dbReference>
<dbReference type="HOGENOM" id="CLU_077636_1_0_6"/>
<dbReference type="Proteomes" id="UP000001740">
    <property type="component" value="Chromosome"/>
</dbReference>
<dbReference type="GO" id="GO:0005737">
    <property type="term" value="C:cytoplasm"/>
    <property type="evidence" value="ECO:0007669"/>
    <property type="project" value="UniProtKB-SubCell"/>
</dbReference>
<dbReference type="GO" id="GO:0005840">
    <property type="term" value="C:ribosome"/>
    <property type="evidence" value="ECO:0007669"/>
    <property type="project" value="InterPro"/>
</dbReference>
<dbReference type="GO" id="GO:0043022">
    <property type="term" value="F:ribosome binding"/>
    <property type="evidence" value="ECO:0007669"/>
    <property type="project" value="InterPro"/>
</dbReference>
<dbReference type="GO" id="GO:0042274">
    <property type="term" value="P:ribosomal small subunit biogenesis"/>
    <property type="evidence" value="ECO:0007669"/>
    <property type="project" value="UniProtKB-UniRule"/>
</dbReference>
<dbReference type="GO" id="GO:0006364">
    <property type="term" value="P:rRNA processing"/>
    <property type="evidence" value="ECO:0007669"/>
    <property type="project" value="UniProtKB-UniRule"/>
</dbReference>
<dbReference type="Gene3D" id="2.30.30.240">
    <property type="entry name" value="PRC-barrel domain"/>
    <property type="match status" value="1"/>
</dbReference>
<dbReference type="Gene3D" id="2.40.30.60">
    <property type="entry name" value="RimM"/>
    <property type="match status" value="1"/>
</dbReference>
<dbReference type="HAMAP" id="MF_00014">
    <property type="entry name" value="Ribosome_mat_RimM"/>
    <property type="match status" value="1"/>
</dbReference>
<dbReference type="InterPro" id="IPR011033">
    <property type="entry name" value="PRC_barrel-like_sf"/>
</dbReference>
<dbReference type="InterPro" id="IPR056792">
    <property type="entry name" value="PRC_RimM"/>
</dbReference>
<dbReference type="InterPro" id="IPR011961">
    <property type="entry name" value="RimM"/>
</dbReference>
<dbReference type="InterPro" id="IPR002676">
    <property type="entry name" value="RimM_N"/>
</dbReference>
<dbReference type="InterPro" id="IPR036976">
    <property type="entry name" value="RimM_N_sf"/>
</dbReference>
<dbReference type="InterPro" id="IPR009000">
    <property type="entry name" value="Transl_B-barrel_sf"/>
</dbReference>
<dbReference type="NCBIfam" id="TIGR02273">
    <property type="entry name" value="16S_RimM"/>
    <property type="match status" value="1"/>
</dbReference>
<dbReference type="PANTHER" id="PTHR33692">
    <property type="entry name" value="RIBOSOME MATURATION FACTOR RIMM"/>
    <property type="match status" value="1"/>
</dbReference>
<dbReference type="PANTHER" id="PTHR33692:SF1">
    <property type="entry name" value="RIBOSOME MATURATION FACTOR RIMM"/>
    <property type="match status" value="1"/>
</dbReference>
<dbReference type="Pfam" id="PF24986">
    <property type="entry name" value="PRC_RimM"/>
    <property type="match status" value="1"/>
</dbReference>
<dbReference type="Pfam" id="PF01782">
    <property type="entry name" value="RimM"/>
    <property type="match status" value="1"/>
</dbReference>
<dbReference type="SUPFAM" id="SSF50346">
    <property type="entry name" value="PRC-barrel domain"/>
    <property type="match status" value="1"/>
</dbReference>
<dbReference type="SUPFAM" id="SSF50447">
    <property type="entry name" value="Translation proteins"/>
    <property type="match status" value="1"/>
</dbReference>
<keyword id="KW-0143">Chaperone</keyword>
<keyword id="KW-0963">Cytoplasm</keyword>
<keyword id="KW-0690">Ribosome biogenesis</keyword>
<keyword id="KW-0698">rRNA processing</keyword>
<name>RIMM_XANOP</name>